<proteinExistence type="evidence at protein level"/>
<keyword id="KW-0963">Cytoplasm</keyword>
<keyword id="KW-0396">Initiation factor</keyword>
<keyword id="KW-0597">Phosphoprotein</keyword>
<keyword id="KW-0648">Protein biosynthesis</keyword>
<keyword id="KW-1185">Reference proteome</keyword>
<organism>
    <name type="scientific">Danio rerio</name>
    <name type="common">Zebrafish</name>
    <name type="synonym">Brachydanio rerio</name>
    <dbReference type="NCBI Taxonomy" id="7955"/>
    <lineage>
        <taxon>Eukaryota</taxon>
        <taxon>Metazoa</taxon>
        <taxon>Chordata</taxon>
        <taxon>Craniata</taxon>
        <taxon>Vertebrata</taxon>
        <taxon>Euteleostomi</taxon>
        <taxon>Actinopterygii</taxon>
        <taxon>Neopterygii</taxon>
        <taxon>Teleostei</taxon>
        <taxon>Ostariophysi</taxon>
        <taxon>Cypriniformes</taxon>
        <taxon>Danionidae</taxon>
        <taxon>Danioninae</taxon>
        <taxon>Danio</taxon>
    </lineage>
</organism>
<accession>Q6PFQ2</accession>
<dbReference type="EMBL" id="BC057465">
    <property type="protein sequence ID" value="AAH57465.1"/>
    <property type="molecule type" value="mRNA"/>
</dbReference>
<dbReference type="RefSeq" id="NP_998628.1">
    <property type="nucleotide sequence ID" value="NM_213463.1"/>
</dbReference>
<dbReference type="SMR" id="Q6PFQ2"/>
<dbReference type="FunCoup" id="Q6PFQ2">
    <property type="interactions" value="2613"/>
</dbReference>
<dbReference type="STRING" id="7955.ENSDARP00000011344"/>
<dbReference type="PaxDb" id="7955-ENSDARP00000111179"/>
<dbReference type="GeneID" id="334234"/>
<dbReference type="KEGG" id="dre:334234"/>
<dbReference type="AGR" id="ZFIN:ZDB-GENE-030131-6166"/>
<dbReference type="CTD" id="8663"/>
<dbReference type="ZFIN" id="ZDB-GENE-030131-6166">
    <property type="gene designation" value="eif3c"/>
</dbReference>
<dbReference type="eggNOG" id="KOG1076">
    <property type="taxonomic scope" value="Eukaryota"/>
</dbReference>
<dbReference type="InParanoid" id="Q6PFQ2"/>
<dbReference type="OrthoDB" id="29647at2759"/>
<dbReference type="PhylomeDB" id="Q6PFQ2"/>
<dbReference type="Reactome" id="R-DRE-156827">
    <property type="pathway name" value="L13a-mediated translational silencing of Ceruloplasmin expression"/>
</dbReference>
<dbReference type="Reactome" id="R-DRE-72689">
    <property type="pathway name" value="Formation of a pool of free 40S subunits"/>
</dbReference>
<dbReference type="Reactome" id="R-DRE-72695">
    <property type="pathway name" value="Formation of the ternary complex, and subsequently, the 43S complex"/>
</dbReference>
<dbReference type="Reactome" id="R-DRE-72702">
    <property type="pathway name" value="Ribosomal scanning and start codon recognition"/>
</dbReference>
<dbReference type="PRO" id="PR:Q6PFQ2"/>
<dbReference type="Proteomes" id="UP000000437">
    <property type="component" value="Chromosome 12"/>
</dbReference>
<dbReference type="GO" id="GO:0016282">
    <property type="term" value="C:eukaryotic 43S preinitiation complex"/>
    <property type="evidence" value="ECO:0007669"/>
    <property type="project" value="UniProtKB-UniRule"/>
</dbReference>
<dbReference type="GO" id="GO:0033290">
    <property type="term" value="C:eukaryotic 48S preinitiation complex"/>
    <property type="evidence" value="ECO:0007669"/>
    <property type="project" value="UniProtKB-UniRule"/>
</dbReference>
<dbReference type="GO" id="GO:0005852">
    <property type="term" value="C:eukaryotic translation initiation factor 3 complex"/>
    <property type="evidence" value="ECO:0000250"/>
    <property type="project" value="UniProtKB"/>
</dbReference>
<dbReference type="GO" id="GO:0003723">
    <property type="term" value="F:RNA binding"/>
    <property type="evidence" value="ECO:0007669"/>
    <property type="project" value="InterPro"/>
</dbReference>
<dbReference type="GO" id="GO:0003743">
    <property type="term" value="F:translation initiation factor activity"/>
    <property type="evidence" value="ECO:0007669"/>
    <property type="project" value="UniProtKB-UniRule"/>
</dbReference>
<dbReference type="GO" id="GO:0031369">
    <property type="term" value="F:translation initiation factor binding"/>
    <property type="evidence" value="ECO:0000318"/>
    <property type="project" value="GO_Central"/>
</dbReference>
<dbReference type="GO" id="GO:0001732">
    <property type="term" value="P:formation of cytoplasmic translation initiation complex"/>
    <property type="evidence" value="ECO:0007669"/>
    <property type="project" value="UniProtKB-UniRule"/>
</dbReference>
<dbReference type="GO" id="GO:0006413">
    <property type="term" value="P:translational initiation"/>
    <property type="evidence" value="ECO:0000250"/>
    <property type="project" value="UniProtKB"/>
</dbReference>
<dbReference type="FunFam" id="1.10.10.10:FF:000461">
    <property type="entry name" value="Eukaryotic translation initiation factor 3 subunit C"/>
    <property type="match status" value="1"/>
</dbReference>
<dbReference type="Gene3D" id="1.10.10.10">
    <property type="entry name" value="Winged helix-like DNA-binding domain superfamily/Winged helix DNA-binding domain"/>
    <property type="match status" value="1"/>
</dbReference>
<dbReference type="HAMAP" id="MF_03002">
    <property type="entry name" value="eIF3c"/>
    <property type="match status" value="1"/>
</dbReference>
<dbReference type="InterPro" id="IPR016024">
    <property type="entry name" value="ARM-type_fold"/>
</dbReference>
<dbReference type="InterPro" id="IPR027516">
    <property type="entry name" value="EIF3C"/>
</dbReference>
<dbReference type="InterPro" id="IPR008905">
    <property type="entry name" value="EIF3C_N_dom"/>
</dbReference>
<dbReference type="InterPro" id="IPR000717">
    <property type="entry name" value="PCI_dom"/>
</dbReference>
<dbReference type="InterPro" id="IPR036388">
    <property type="entry name" value="WH-like_DNA-bd_sf"/>
</dbReference>
<dbReference type="InterPro" id="IPR036390">
    <property type="entry name" value="WH_DNA-bd_sf"/>
</dbReference>
<dbReference type="PANTHER" id="PTHR13937">
    <property type="entry name" value="EUKARYOTIC TRANSLATION INITATION FACTOR 3, SUBUNIT 8 EIF3S8 -RELATED"/>
    <property type="match status" value="1"/>
</dbReference>
<dbReference type="PANTHER" id="PTHR13937:SF0">
    <property type="entry name" value="EUKARYOTIC TRANSLATION INITIATION FACTOR 3 SUBUNIT C-RELATED"/>
    <property type="match status" value="1"/>
</dbReference>
<dbReference type="Pfam" id="PF05470">
    <property type="entry name" value="eIF-3c_N"/>
    <property type="match status" value="1"/>
</dbReference>
<dbReference type="Pfam" id="PF01399">
    <property type="entry name" value="PCI"/>
    <property type="match status" value="1"/>
</dbReference>
<dbReference type="SMART" id="SM00088">
    <property type="entry name" value="PINT"/>
    <property type="match status" value="1"/>
</dbReference>
<dbReference type="SUPFAM" id="SSF48371">
    <property type="entry name" value="ARM repeat"/>
    <property type="match status" value="1"/>
</dbReference>
<dbReference type="SUPFAM" id="SSF46785">
    <property type="entry name" value="Winged helix' DNA-binding domain"/>
    <property type="match status" value="1"/>
</dbReference>
<dbReference type="PROSITE" id="PS50250">
    <property type="entry name" value="PCI"/>
    <property type="match status" value="1"/>
</dbReference>
<evidence type="ECO:0000255" key="1">
    <source>
        <dbReference type="HAMAP-Rule" id="MF_03002"/>
    </source>
</evidence>
<evidence type="ECO:0000255" key="2">
    <source>
        <dbReference type="PROSITE-ProRule" id="PRU01185"/>
    </source>
</evidence>
<evidence type="ECO:0000256" key="3">
    <source>
        <dbReference type="SAM" id="MobiDB-lite"/>
    </source>
</evidence>
<reference key="1">
    <citation type="submission" date="2003-09" db="EMBL/GenBank/DDBJ databases">
        <authorList>
            <consortium name="NIH - Zebrafish Gene Collection (ZGC) project"/>
        </authorList>
    </citation>
    <scope>NUCLEOTIDE SEQUENCE [LARGE SCALE MRNA]</scope>
    <source>
        <strain>AB</strain>
    </source>
</reference>
<reference key="2">
    <citation type="journal article" date="2008" name="J. Proteome Res.">
        <title>Online automated in vivo zebrafish phosphoproteomics: from large-scale analysis down to a single embryo.</title>
        <authorList>
            <person name="Lemeer S."/>
            <person name="Pinkse M.W.H."/>
            <person name="Mohammed S."/>
            <person name="van Breukelen B."/>
            <person name="den Hertog J."/>
            <person name="Slijper M."/>
            <person name="Heck A.J.R."/>
        </authorList>
    </citation>
    <scope>PHOSPHORYLATION [LARGE SCALE ANALYSIS]</scope>
    <scope>IDENTIFICATION BY MASS SPECTROMETRY</scope>
    <source>
        <tissue>Embryo</tissue>
    </source>
</reference>
<protein>
    <recommendedName>
        <fullName evidence="1">Eukaryotic translation initiation factor 3 subunit C</fullName>
        <shortName evidence="1">eIF3c</shortName>
    </recommendedName>
    <alternativeName>
        <fullName evidence="1">Eukaryotic translation initiation factor 3 subunit 8</fullName>
    </alternativeName>
</protein>
<gene>
    <name type="primary">eif3c</name>
    <name type="synonym">eif3s8</name>
</gene>
<feature type="chain" id="PRO_0000365377" description="Eukaryotic translation initiation factor 3 subunit C">
    <location>
        <begin position="1"/>
        <end position="926"/>
    </location>
</feature>
<feature type="domain" description="PCI" evidence="2">
    <location>
        <begin position="672"/>
        <end position="848"/>
    </location>
</feature>
<feature type="region of interest" description="Disordered" evidence="3">
    <location>
        <begin position="1"/>
        <end position="27"/>
    </location>
</feature>
<feature type="region of interest" description="Disordered" evidence="3">
    <location>
        <begin position="157"/>
        <end position="251"/>
    </location>
</feature>
<feature type="region of interest" description="Disordered" evidence="3">
    <location>
        <begin position="266"/>
        <end position="300"/>
    </location>
</feature>
<feature type="region of interest" description="Disordered" evidence="3">
    <location>
        <begin position="890"/>
        <end position="926"/>
    </location>
</feature>
<feature type="compositionally biased region" description="Basic and acidic residues" evidence="3">
    <location>
        <begin position="200"/>
        <end position="210"/>
    </location>
</feature>
<feature type="compositionally biased region" description="Acidic residues" evidence="3">
    <location>
        <begin position="220"/>
        <end position="235"/>
    </location>
</feature>
<feature type="compositionally biased region" description="Basic residues" evidence="3">
    <location>
        <begin position="274"/>
        <end position="283"/>
    </location>
</feature>
<feature type="compositionally biased region" description="Acidic residues" evidence="3">
    <location>
        <begin position="287"/>
        <end position="299"/>
    </location>
</feature>
<feature type="compositionally biased region" description="Low complexity" evidence="3">
    <location>
        <begin position="890"/>
        <end position="919"/>
    </location>
</feature>
<name>EIF3C_DANRE</name>
<sequence length="926" mass="106367">MSRFFATGSDSESEESSSADEITPKAAGTTLRQQALLLSDDEEDTKRVVRSAKDKRFEELTNLIKTIRNAIKIRGISKCLEEFEQLCRAFVKSKTIVDKEGVPKFYIRLLADLEDYLNQLWEDKEGKKKMNKNNAKALSTLRQKIRKYNRDFETEIASYKENPEQSADEEEEKDDIGSGSSESDDDDDDDITAKSFMKKKPQEEEKKAPEASKFLKGAADEESESDDDEDSEDWASDSVGSDSESEDNDGTAASLAVVFLKKDVGEKASDRKKDDRRRRHKKKERIEEEAEEEGEAEEGGWEKVKGGVPLVKEKPKMFAKGTEINTGVVVKKLSEILQARGKKGTDRAAQIELLHALAGIAAENNLGEGILVKIKFNIIASLYDYNPNLAAFMKADMWKKCLDCIDELLDILFNNNNIFIGENIAEDSENLAISDQPFRVRGCILTLVERMDEEFTKIMQNTDPHSQEYVDNLKDEGRVCGIIDRLLQYLETKGSTEEVCRVYLRRIMHTYYKFDYKAHRRSLGLQGETKSEQDQEESEGDDSAIIMDRLCKFIYAKDRTDRIRTCAILCHIYHHALHSRWYQARDLMLMSHLQDNIQHADPPVQILYNRTMVQLGICAFRQGMIKDAHNALLDIQSSGRAKELLGQGLLMRNMQERNAEQEKIEKRRQVPFHMHINLELLECVYLVSAMLLEIPYMAAHEFDARRRMISKQFHHQLRVGERQPLLGPPESMREHVVAASKAMKMGDWRTCHSFIINEKMNSKVWDLFPEAKCVREMLVRKIQEESLRTYLFTYSSVYDSISMETLSEMFELELPTVHSIISKMIINEELMASLDQPTQTVVMHRTEPTSLQNMALQLAEKLGGLVENNERVFDLKQGVYGGYFNRDQKGGYQQKQGYQRGDQKGGYQQKQNYQRGGYRNQNQSSY</sequence>
<comment type="function">
    <text evidence="1">Component of the eukaryotic translation initiation factor 3 (eIF-3) complex, which is involved in protein synthesis of a specialized repertoire of mRNAs and, together with other initiation factors, stimulates binding of mRNA and methionyl-tRNAi to the 40S ribosome. The eIF-3 complex specifically targets and initiates translation of a subset of mRNAs involved in cell proliferation.</text>
</comment>
<comment type="subunit">
    <text evidence="1">Component of the eukaryotic translation initiation factor 3 (eIF-3) complex, which is composed of 13 subunits: eif3a, eif3b, eif3c, eif3d, eif3e, eif3f, eif3g, eif3h, eif3i, eif3j, eif3k, eif3l and eif3m.</text>
</comment>
<comment type="subcellular location">
    <subcellularLocation>
        <location evidence="1">Cytoplasm</location>
    </subcellularLocation>
</comment>
<comment type="similarity">
    <text evidence="1">Belongs to the eIF-3 subunit C family.</text>
</comment>